<protein>
    <recommendedName>
        <fullName evidence="1">UPF0178 protein CV_1768</fullName>
    </recommendedName>
</protein>
<proteinExistence type="inferred from homology"/>
<dbReference type="EMBL" id="AE016825">
    <property type="protein sequence ID" value="AAQ59442.1"/>
    <property type="molecule type" value="Genomic_DNA"/>
</dbReference>
<dbReference type="RefSeq" id="WP_011135320.1">
    <property type="nucleotide sequence ID" value="NC_005085.1"/>
</dbReference>
<dbReference type="SMR" id="Q7NX61"/>
<dbReference type="GeneID" id="66367441"/>
<dbReference type="KEGG" id="cvi:CV_1768"/>
<dbReference type="eggNOG" id="COG1671">
    <property type="taxonomic scope" value="Bacteria"/>
</dbReference>
<dbReference type="HOGENOM" id="CLU_106619_2_1_4"/>
<dbReference type="OrthoDB" id="9798918at2"/>
<dbReference type="Proteomes" id="UP000001424">
    <property type="component" value="Chromosome"/>
</dbReference>
<dbReference type="CDD" id="cd18720">
    <property type="entry name" value="PIN_YqxD-like"/>
    <property type="match status" value="1"/>
</dbReference>
<dbReference type="HAMAP" id="MF_00489">
    <property type="entry name" value="UPF0178"/>
    <property type="match status" value="1"/>
</dbReference>
<dbReference type="InterPro" id="IPR003791">
    <property type="entry name" value="UPF0178"/>
</dbReference>
<dbReference type="NCBIfam" id="NF001095">
    <property type="entry name" value="PRK00124.1"/>
    <property type="match status" value="1"/>
</dbReference>
<dbReference type="PANTHER" id="PTHR35146">
    <property type="entry name" value="UPF0178 PROTEIN YAII"/>
    <property type="match status" value="1"/>
</dbReference>
<dbReference type="PANTHER" id="PTHR35146:SF1">
    <property type="entry name" value="UPF0178 PROTEIN YAII"/>
    <property type="match status" value="1"/>
</dbReference>
<dbReference type="Pfam" id="PF02639">
    <property type="entry name" value="DUF188"/>
    <property type="match status" value="1"/>
</dbReference>
<name>Y1768_CHRVO</name>
<comment type="similarity">
    <text evidence="1">Belongs to the UPF0178 family.</text>
</comment>
<accession>Q7NX61</accession>
<sequence>MTIWVDADACPKVIREVLCRAAQRTGVELVFVANQLLTVPKAPNIRALQVPKGFDVADNEIARRIQPTDLLITGDIPLASEALAKGAQALNWRGDAFSKETIAAQLTMRDFMDTLRASGVQTEGPPPLSQADRQAFARQLDIWLARR</sequence>
<gene>
    <name type="ordered locus">CV_1768</name>
</gene>
<evidence type="ECO:0000255" key="1">
    <source>
        <dbReference type="HAMAP-Rule" id="MF_00489"/>
    </source>
</evidence>
<organism>
    <name type="scientific">Chromobacterium violaceum (strain ATCC 12472 / DSM 30191 / JCM 1249 / CCUG 213 / NBRC 12614 / NCIMB 9131 / NCTC 9757 / MK)</name>
    <dbReference type="NCBI Taxonomy" id="243365"/>
    <lineage>
        <taxon>Bacteria</taxon>
        <taxon>Pseudomonadati</taxon>
        <taxon>Pseudomonadota</taxon>
        <taxon>Betaproteobacteria</taxon>
        <taxon>Neisseriales</taxon>
        <taxon>Chromobacteriaceae</taxon>
        <taxon>Chromobacterium</taxon>
    </lineage>
</organism>
<reference key="1">
    <citation type="journal article" date="2003" name="Proc. Natl. Acad. Sci. U.S.A.">
        <title>The complete genome sequence of Chromobacterium violaceum reveals remarkable and exploitable bacterial adaptability.</title>
        <authorList>
            <person name="Vasconcelos A.T.R."/>
            <person name="de Almeida D.F."/>
            <person name="Hungria M."/>
            <person name="Guimaraes C.T."/>
            <person name="Antonio R.V."/>
            <person name="Almeida F.C."/>
            <person name="de Almeida L.G.P."/>
            <person name="de Almeida R."/>
            <person name="Alves-Gomes J.A."/>
            <person name="Andrade E.M."/>
            <person name="Araripe J."/>
            <person name="de Araujo M.F.F."/>
            <person name="Astolfi-Filho S."/>
            <person name="Azevedo V."/>
            <person name="Baptista A.J."/>
            <person name="Bataus L.A.M."/>
            <person name="Batista J.S."/>
            <person name="Belo A."/>
            <person name="van den Berg C."/>
            <person name="Bogo M."/>
            <person name="Bonatto S."/>
            <person name="Bordignon J."/>
            <person name="Brigido M.M."/>
            <person name="Brito C.A."/>
            <person name="Brocchi M."/>
            <person name="Burity H.A."/>
            <person name="Camargo A.A."/>
            <person name="Cardoso D.D.P."/>
            <person name="Carneiro N.P."/>
            <person name="Carraro D.M."/>
            <person name="Carvalho C.M.B."/>
            <person name="Cascardo J.C.M."/>
            <person name="Cavada B.S."/>
            <person name="Chueire L.M.O."/>
            <person name="Creczynski-Pasa T.B."/>
            <person name="Cunha-Junior N.C."/>
            <person name="Fagundes N."/>
            <person name="Falcao C.L."/>
            <person name="Fantinatti F."/>
            <person name="Farias I.P."/>
            <person name="Felipe M.S.S."/>
            <person name="Ferrari L.P."/>
            <person name="Ferro J.A."/>
            <person name="Ferro M.I.T."/>
            <person name="Franco G.R."/>
            <person name="Freitas N.S.A."/>
            <person name="Furlan L.R."/>
            <person name="Gazzinelli R.T."/>
            <person name="Gomes E.A."/>
            <person name="Goncalves P.R."/>
            <person name="Grangeiro T.B."/>
            <person name="Grattapaglia D."/>
            <person name="Grisard E.C."/>
            <person name="Hanna E.S."/>
            <person name="Jardim S.N."/>
            <person name="Laurino J."/>
            <person name="Leoi L.C.T."/>
            <person name="Lima L.F.A."/>
            <person name="Loureiro M.F."/>
            <person name="Lyra M.C.C.P."/>
            <person name="Madeira H.M.F."/>
            <person name="Manfio G.P."/>
            <person name="Maranhao A.Q."/>
            <person name="Martins W.S."/>
            <person name="di Mauro S.M.Z."/>
            <person name="de Medeiros S.R.B."/>
            <person name="Meissner R.V."/>
            <person name="Moreira M.A.M."/>
            <person name="Nascimento F.F."/>
            <person name="Nicolas M.F."/>
            <person name="Oliveira J.G."/>
            <person name="Oliveira S.C."/>
            <person name="Paixao R.F.C."/>
            <person name="Parente J.A."/>
            <person name="Pedrosa F.O."/>
            <person name="Pena S.D.J."/>
            <person name="Pereira J.O."/>
            <person name="Pereira M."/>
            <person name="Pinto L.S.R.C."/>
            <person name="Pinto L.S."/>
            <person name="Porto J.I.R."/>
            <person name="Potrich D.P."/>
            <person name="Ramalho-Neto C.E."/>
            <person name="Reis A.M.M."/>
            <person name="Rigo L.U."/>
            <person name="Rondinelli E."/>
            <person name="Santos E.B.P."/>
            <person name="Santos F.R."/>
            <person name="Schneider M.P.C."/>
            <person name="Seuanez H.N."/>
            <person name="Silva A.M.R."/>
            <person name="da Silva A.L.C."/>
            <person name="Silva D.W."/>
            <person name="Silva R."/>
            <person name="Simoes I.C."/>
            <person name="Simon D."/>
            <person name="Soares C.M.A."/>
            <person name="Soares R.B.A."/>
            <person name="Souza E.M."/>
            <person name="Souza K.R.L."/>
            <person name="Souza R.C."/>
            <person name="Steffens M.B.R."/>
            <person name="Steindel M."/>
            <person name="Teixeira S.R."/>
            <person name="Urmenyi T."/>
            <person name="Vettore A."/>
            <person name="Wassem R."/>
            <person name="Zaha A."/>
            <person name="Simpson A.J.G."/>
        </authorList>
    </citation>
    <scope>NUCLEOTIDE SEQUENCE [LARGE SCALE GENOMIC DNA]</scope>
    <source>
        <strain>ATCC 12472 / DSM 30191 / JCM 1249 / CCUG 213 / NBRC 12614 / NCIMB 9131 / NCTC 9757 / MK</strain>
    </source>
</reference>
<feature type="chain" id="PRO_0000175972" description="UPF0178 protein CV_1768">
    <location>
        <begin position="1"/>
        <end position="147"/>
    </location>
</feature>
<keyword id="KW-1185">Reference proteome</keyword>